<reference key="1">
    <citation type="submission" date="2007-02" db="EMBL/GenBank/DDBJ databases">
        <title>Complete sequence of Mycobacterium sp. JLS.</title>
        <authorList>
            <consortium name="US DOE Joint Genome Institute"/>
            <person name="Copeland A."/>
            <person name="Lucas S."/>
            <person name="Lapidus A."/>
            <person name="Barry K."/>
            <person name="Detter J.C."/>
            <person name="Glavina del Rio T."/>
            <person name="Hammon N."/>
            <person name="Israni S."/>
            <person name="Dalin E."/>
            <person name="Tice H."/>
            <person name="Pitluck S."/>
            <person name="Chain P."/>
            <person name="Malfatti S."/>
            <person name="Shin M."/>
            <person name="Vergez L."/>
            <person name="Schmutz J."/>
            <person name="Larimer F."/>
            <person name="Land M."/>
            <person name="Hauser L."/>
            <person name="Kyrpides N."/>
            <person name="Mikhailova N."/>
            <person name="Miller C.D."/>
            <person name="Anderson A.J."/>
            <person name="Sims R.C."/>
            <person name="Richardson P."/>
        </authorList>
    </citation>
    <scope>NUCLEOTIDE SEQUENCE [LARGE SCALE GENOMIC DNA]</scope>
    <source>
        <strain>JLS</strain>
    </source>
</reference>
<accession>A3PZ57</accession>
<protein>
    <recommendedName>
        <fullName evidence="1">Transcription antitermination protein NusB</fullName>
    </recommendedName>
    <alternativeName>
        <fullName evidence="1">Antitermination factor NusB</fullName>
    </alternativeName>
</protein>
<sequence length="162" mass="17557">MSDRRPDRGRHQARKRAVDLLFEAEARGLTAAEVATSRNKLAGTQPDVTALNPYTVTVARGVTDHRDHIDDLISAHLQGWTLDRLPAVDRAILRVAVWELLHAEDVPEPVAVDEAVELAKQLSTDDSPGFVNGVLGQVMLVTPQIRAASQAVRESAQGPSEG</sequence>
<gene>
    <name evidence="1" type="primary">nusB</name>
    <name type="ordered locus">Mjls_2400</name>
</gene>
<organism>
    <name type="scientific">Mycobacterium sp. (strain JLS)</name>
    <dbReference type="NCBI Taxonomy" id="164757"/>
    <lineage>
        <taxon>Bacteria</taxon>
        <taxon>Bacillati</taxon>
        <taxon>Actinomycetota</taxon>
        <taxon>Actinomycetes</taxon>
        <taxon>Mycobacteriales</taxon>
        <taxon>Mycobacteriaceae</taxon>
        <taxon>Mycobacterium</taxon>
    </lineage>
</organism>
<dbReference type="EMBL" id="CP000580">
    <property type="protein sequence ID" value="ABN98184.1"/>
    <property type="molecule type" value="Genomic_DNA"/>
</dbReference>
<dbReference type="SMR" id="A3PZ57"/>
<dbReference type="KEGG" id="mjl:Mjls_2400"/>
<dbReference type="HOGENOM" id="CLU_087843_2_3_11"/>
<dbReference type="BioCyc" id="MSP164757:G1G8C-2419-MONOMER"/>
<dbReference type="GO" id="GO:0005829">
    <property type="term" value="C:cytosol"/>
    <property type="evidence" value="ECO:0007669"/>
    <property type="project" value="TreeGrafter"/>
</dbReference>
<dbReference type="GO" id="GO:0003723">
    <property type="term" value="F:RNA binding"/>
    <property type="evidence" value="ECO:0007669"/>
    <property type="project" value="UniProtKB-UniRule"/>
</dbReference>
<dbReference type="GO" id="GO:0006353">
    <property type="term" value="P:DNA-templated transcription termination"/>
    <property type="evidence" value="ECO:0007669"/>
    <property type="project" value="UniProtKB-UniRule"/>
</dbReference>
<dbReference type="GO" id="GO:0031564">
    <property type="term" value="P:transcription antitermination"/>
    <property type="evidence" value="ECO:0007669"/>
    <property type="project" value="UniProtKB-KW"/>
</dbReference>
<dbReference type="CDD" id="cd00619">
    <property type="entry name" value="Terminator_NusB"/>
    <property type="match status" value="1"/>
</dbReference>
<dbReference type="Gene3D" id="1.10.940.10">
    <property type="entry name" value="NusB-like"/>
    <property type="match status" value="1"/>
</dbReference>
<dbReference type="HAMAP" id="MF_00073">
    <property type="entry name" value="NusB"/>
    <property type="match status" value="1"/>
</dbReference>
<dbReference type="InterPro" id="IPR035926">
    <property type="entry name" value="NusB-like_sf"/>
</dbReference>
<dbReference type="InterPro" id="IPR011605">
    <property type="entry name" value="NusB_fam"/>
</dbReference>
<dbReference type="InterPro" id="IPR006027">
    <property type="entry name" value="NusB_RsmB_TIM44"/>
</dbReference>
<dbReference type="NCBIfam" id="TIGR01951">
    <property type="entry name" value="nusB"/>
    <property type="match status" value="1"/>
</dbReference>
<dbReference type="PANTHER" id="PTHR11078:SF3">
    <property type="entry name" value="ANTITERMINATION NUSB DOMAIN-CONTAINING PROTEIN"/>
    <property type="match status" value="1"/>
</dbReference>
<dbReference type="PANTHER" id="PTHR11078">
    <property type="entry name" value="N UTILIZATION SUBSTANCE PROTEIN B-RELATED"/>
    <property type="match status" value="1"/>
</dbReference>
<dbReference type="Pfam" id="PF01029">
    <property type="entry name" value="NusB"/>
    <property type="match status" value="1"/>
</dbReference>
<dbReference type="SUPFAM" id="SSF48013">
    <property type="entry name" value="NusB-like"/>
    <property type="match status" value="1"/>
</dbReference>
<feature type="chain" id="PRO_1000023750" description="Transcription antitermination protein NusB">
    <location>
        <begin position="1"/>
        <end position="162"/>
    </location>
</feature>
<comment type="function">
    <text evidence="1">Involved in transcription antitermination. Required for transcription of ribosomal RNA (rRNA) genes. Binds specifically to the boxA antiterminator sequence of the ribosomal RNA (rrn) operons.</text>
</comment>
<comment type="similarity">
    <text evidence="1">Belongs to the NusB family.</text>
</comment>
<name>NUSB_MYCSJ</name>
<proteinExistence type="inferred from homology"/>
<keyword id="KW-0694">RNA-binding</keyword>
<keyword id="KW-0804">Transcription</keyword>
<keyword id="KW-0889">Transcription antitermination</keyword>
<keyword id="KW-0805">Transcription regulation</keyword>
<evidence type="ECO:0000255" key="1">
    <source>
        <dbReference type="HAMAP-Rule" id="MF_00073"/>
    </source>
</evidence>